<reference key="1">
    <citation type="journal article" date="2006" name="Proc. Natl. Acad. Sci. U.S.A.">
        <title>Molecular genetic anatomy of inter- and intraserotype variation in the human bacterial pathogen group A Streptococcus.</title>
        <authorList>
            <person name="Beres S.B."/>
            <person name="Richter E.W."/>
            <person name="Nagiec M.J."/>
            <person name="Sumby P."/>
            <person name="Porcella S.F."/>
            <person name="DeLeo F.R."/>
            <person name="Musser J.M."/>
        </authorList>
    </citation>
    <scope>NUCLEOTIDE SEQUENCE [LARGE SCALE GENOMIC DNA]</scope>
    <source>
        <strain>MGAS10270</strain>
    </source>
</reference>
<comment type="similarity">
    <text evidence="1">Belongs to the bacterial ribosomal protein bL36 family.</text>
</comment>
<keyword id="KW-0687">Ribonucleoprotein</keyword>
<keyword id="KW-0689">Ribosomal protein</keyword>
<evidence type="ECO:0000255" key="1">
    <source>
        <dbReference type="HAMAP-Rule" id="MF_00251"/>
    </source>
</evidence>
<evidence type="ECO:0000305" key="2"/>
<sequence length="38" mass="4451">MKVRPSVKPICEYCKVIRRNGRVMVICPTNPKHKQRQG</sequence>
<feature type="chain" id="PRO_0000302309" description="Large ribosomal subunit protein bL36">
    <location>
        <begin position="1"/>
        <end position="38"/>
    </location>
</feature>
<accession>Q1JJ38</accession>
<dbReference type="EMBL" id="CP000260">
    <property type="protein sequence ID" value="ABF33135.1"/>
    <property type="molecule type" value="Genomic_DNA"/>
</dbReference>
<dbReference type="RefSeq" id="WP_000868345.1">
    <property type="nucleotide sequence ID" value="NZ_CVUH01000001.1"/>
</dbReference>
<dbReference type="SMR" id="Q1JJ38"/>
<dbReference type="GeneID" id="93860206"/>
<dbReference type="KEGG" id="sph:MGAS10270_Spy0070"/>
<dbReference type="HOGENOM" id="CLU_135723_6_2_9"/>
<dbReference type="Proteomes" id="UP000002436">
    <property type="component" value="Chromosome"/>
</dbReference>
<dbReference type="GO" id="GO:0005737">
    <property type="term" value="C:cytoplasm"/>
    <property type="evidence" value="ECO:0007669"/>
    <property type="project" value="UniProtKB-ARBA"/>
</dbReference>
<dbReference type="GO" id="GO:1990904">
    <property type="term" value="C:ribonucleoprotein complex"/>
    <property type="evidence" value="ECO:0007669"/>
    <property type="project" value="UniProtKB-KW"/>
</dbReference>
<dbReference type="GO" id="GO:0005840">
    <property type="term" value="C:ribosome"/>
    <property type="evidence" value="ECO:0007669"/>
    <property type="project" value="UniProtKB-KW"/>
</dbReference>
<dbReference type="GO" id="GO:0003735">
    <property type="term" value="F:structural constituent of ribosome"/>
    <property type="evidence" value="ECO:0007669"/>
    <property type="project" value="InterPro"/>
</dbReference>
<dbReference type="GO" id="GO:0006412">
    <property type="term" value="P:translation"/>
    <property type="evidence" value="ECO:0007669"/>
    <property type="project" value="UniProtKB-UniRule"/>
</dbReference>
<dbReference type="HAMAP" id="MF_00251">
    <property type="entry name" value="Ribosomal_bL36"/>
    <property type="match status" value="1"/>
</dbReference>
<dbReference type="InterPro" id="IPR000473">
    <property type="entry name" value="Ribosomal_bL36"/>
</dbReference>
<dbReference type="InterPro" id="IPR035977">
    <property type="entry name" value="Ribosomal_bL36_sp"/>
</dbReference>
<dbReference type="NCBIfam" id="TIGR01022">
    <property type="entry name" value="rpmJ_bact"/>
    <property type="match status" value="1"/>
</dbReference>
<dbReference type="PANTHER" id="PTHR42888">
    <property type="entry name" value="50S RIBOSOMAL PROTEIN L36, CHLOROPLASTIC"/>
    <property type="match status" value="1"/>
</dbReference>
<dbReference type="PANTHER" id="PTHR42888:SF1">
    <property type="entry name" value="LARGE RIBOSOMAL SUBUNIT PROTEIN BL36C"/>
    <property type="match status" value="1"/>
</dbReference>
<dbReference type="Pfam" id="PF00444">
    <property type="entry name" value="Ribosomal_L36"/>
    <property type="match status" value="1"/>
</dbReference>
<dbReference type="SUPFAM" id="SSF57840">
    <property type="entry name" value="Ribosomal protein L36"/>
    <property type="match status" value="1"/>
</dbReference>
<dbReference type="PROSITE" id="PS00828">
    <property type="entry name" value="RIBOSOMAL_L36"/>
    <property type="match status" value="1"/>
</dbReference>
<organism>
    <name type="scientific">Streptococcus pyogenes serotype M2 (strain MGAS10270)</name>
    <dbReference type="NCBI Taxonomy" id="370552"/>
    <lineage>
        <taxon>Bacteria</taxon>
        <taxon>Bacillati</taxon>
        <taxon>Bacillota</taxon>
        <taxon>Bacilli</taxon>
        <taxon>Lactobacillales</taxon>
        <taxon>Streptococcaceae</taxon>
        <taxon>Streptococcus</taxon>
    </lineage>
</organism>
<gene>
    <name evidence="1" type="primary">rpmJ</name>
    <name type="ordered locus">MGAS10270_Spy0070</name>
</gene>
<protein>
    <recommendedName>
        <fullName evidence="1">Large ribosomal subunit protein bL36</fullName>
    </recommendedName>
    <alternativeName>
        <fullName evidence="2">50S ribosomal protein L36</fullName>
    </alternativeName>
</protein>
<proteinExistence type="inferred from homology"/>
<name>RL36_STRPD</name>